<proteinExistence type="evidence at protein level"/>
<keyword id="KW-1015">Disulfide bond</keyword>
<keyword id="KW-0646">Protease inhibitor</keyword>
<keyword id="KW-0964">Secreted</keyword>
<keyword id="KW-0732">Signal</keyword>
<keyword id="KW-0789">Thiol protease inhibitor</keyword>
<feature type="signal peptide" evidence="1">
    <location>
        <begin position="1"/>
        <end position="26"/>
    </location>
</feature>
<feature type="chain" id="PRO_5000654417" description="Cystatin">
    <location>
        <begin position="27"/>
        <end position="141"/>
    </location>
</feature>
<feature type="domain" description="Cystatin">
    <location>
        <begin position="29"/>
        <end position="129"/>
    </location>
</feature>
<feature type="short sequence motif" description="Secondary area of contact" evidence="1">
    <location>
        <begin position="73"/>
        <end position="77"/>
    </location>
</feature>
<feature type="site" description="Reactive site" evidence="1">
    <location>
        <position position="29"/>
    </location>
</feature>
<feature type="disulfide bond" evidence="1">
    <location>
        <begin position="91"/>
        <end position="107"/>
    </location>
</feature>
<feature type="disulfide bond" evidence="1">
    <location>
        <begin position="120"/>
        <end position="140"/>
    </location>
</feature>
<dbReference type="EMBL" id="FJ411282">
    <property type="protein sequence ID" value="ACR83843.1"/>
    <property type="molecule type" value="mRNA"/>
</dbReference>
<dbReference type="SMR" id="E3P6N7"/>
<dbReference type="MEROPS" id="I25.012"/>
<dbReference type="GO" id="GO:0070062">
    <property type="term" value="C:extracellular exosome"/>
    <property type="evidence" value="ECO:0007669"/>
    <property type="project" value="TreeGrafter"/>
</dbReference>
<dbReference type="GO" id="GO:0004869">
    <property type="term" value="F:cysteine-type endopeptidase inhibitor activity"/>
    <property type="evidence" value="ECO:0007669"/>
    <property type="project" value="UniProtKB-KW"/>
</dbReference>
<dbReference type="CDD" id="cd00042">
    <property type="entry name" value="CY"/>
    <property type="match status" value="1"/>
</dbReference>
<dbReference type="FunFam" id="3.10.450.10:FF:000004">
    <property type="entry name" value="Cystatin C"/>
    <property type="match status" value="1"/>
</dbReference>
<dbReference type="Gene3D" id="3.10.450.10">
    <property type="match status" value="1"/>
</dbReference>
<dbReference type="InterPro" id="IPR000010">
    <property type="entry name" value="Cystatin_dom"/>
</dbReference>
<dbReference type="InterPro" id="IPR046350">
    <property type="entry name" value="Cystatin_sf"/>
</dbReference>
<dbReference type="InterPro" id="IPR018073">
    <property type="entry name" value="Prot_inh_cystat_CS"/>
</dbReference>
<dbReference type="PANTHER" id="PTHR47033">
    <property type="entry name" value="CYSTATIN-M"/>
    <property type="match status" value="1"/>
</dbReference>
<dbReference type="PANTHER" id="PTHR47033:SF1">
    <property type="entry name" value="CYSTATIN-M"/>
    <property type="match status" value="1"/>
</dbReference>
<dbReference type="Pfam" id="PF00031">
    <property type="entry name" value="Cystatin"/>
    <property type="match status" value="1"/>
</dbReference>
<dbReference type="SMART" id="SM00043">
    <property type="entry name" value="CY"/>
    <property type="match status" value="1"/>
</dbReference>
<dbReference type="SUPFAM" id="SSF54403">
    <property type="entry name" value="Cystatin/monellin"/>
    <property type="match status" value="1"/>
</dbReference>
<dbReference type="PROSITE" id="PS00287">
    <property type="entry name" value="CYSTATIN"/>
    <property type="match status" value="1"/>
</dbReference>
<comment type="function">
    <text evidence="1">Inhibits various C1 cysteine proteases including cathepsin L, papain and cathepsin B. This protein has no toxic activity and its function in the venom is unknown. It may play a role as a housekeeping or regulatory protein (By similarity).</text>
</comment>
<comment type="subcellular location">
    <subcellularLocation>
        <location>Secreted</location>
    </subcellularLocation>
</comment>
<comment type="tissue specificity">
    <text evidence="3">Expressed at a low level by the venom gland (at protein level).</text>
</comment>
<comment type="miscellaneous">
    <text evidence="1">Negative results: the recombinant protein does not inhibit calpain-1 (CAPN1), a C2 family cysteine protease and legumain (LGMN), a C13 family cysteine protease. Does not provoke cell death (PC3 prostrate cancer cells) (By similarity).</text>
</comment>
<comment type="similarity">
    <text evidence="2">Belongs to the cystatin family.</text>
</comment>
<reference key="1">
    <citation type="journal article" date="2011" name="Biochimie">
        <title>Cloning and characterisation of novel cystatins from elapid snake venom glands.</title>
        <authorList>
            <person name="Richards R."/>
            <person name="St Pierre L."/>
            <person name="Trabi M."/>
            <person name="Johnson L.A."/>
            <person name="de Jersey J."/>
            <person name="Masci P.P."/>
            <person name="Lavin M.F."/>
        </authorList>
    </citation>
    <scope>NUCLEOTIDE SEQUENCE [MRNA]</scope>
    <scope>LEVEL OF PROTEIN EXPRESSION</scope>
    <source>
        <tissue>Venom</tissue>
        <tissue>Venom gland</tissue>
    </source>
</reference>
<evidence type="ECO:0000250" key="1"/>
<evidence type="ECO:0000305" key="2"/>
<evidence type="ECO:0000305" key="3">
    <source>
    </source>
</evidence>
<accession>E3P6N7</accession>
<name>CYT_PSEPO</name>
<sequence>MVHSQLPVAGPLRLLCALLLLPSATMIPGGLSPRSVTDPDVQEAAEFAVQEYNALSANAYYYKQLRIVEAQSQVVSGAKYYLTMELMKTKCAKTTGKPKVYKEIQNCELPPKAQQEKLNCRFQVWSRPWLEKMELTKMSCN</sequence>
<protein>
    <recommendedName>
        <fullName>Cystatin</fullName>
    </recommendedName>
</protein>
<organism>
    <name type="scientific">Pseudechis porphyriacus</name>
    <name type="common">Red-bellied black snake</name>
    <dbReference type="NCBI Taxonomy" id="8671"/>
    <lineage>
        <taxon>Eukaryota</taxon>
        <taxon>Metazoa</taxon>
        <taxon>Chordata</taxon>
        <taxon>Craniata</taxon>
        <taxon>Vertebrata</taxon>
        <taxon>Euteleostomi</taxon>
        <taxon>Lepidosauria</taxon>
        <taxon>Squamata</taxon>
        <taxon>Bifurcata</taxon>
        <taxon>Unidentata</taxon>
        <taxon>Episquamata</taxon>
        <taxon>Toxicofera</taxon>
        <taxon>Serpentes</taxon>
        <taxon>Colubroidea</taxon>
        <taxon>Elapidae</taxon>
        <taxon>Hydrophiinae</taxon>
        <taxon>Pseudechis</taxon>
    </lineage>
</organism>